<evidence type="ECO:0000250" key="1"/>
<evidence type="ECO:0000256" key="2">
    <source>
        <dbReference type="SAM" id="MobiDB-lite"/>
    </source>
</evidence>
<evidence type="ECO:0000305" key="3"/>
<accession>Q6CTM7</accession>
<gene>
    <name type="primary">RIM8</name>
    <name type="ordered locus">KLLA0C11473g</name>
</gene>
<name>PALF_KLULA</name>
<proteinExistence type="inferred from homology"/>
<keyword id="KW-1185">Reference proteome</keyword>
<protein>
    <recommendedName>
        <fullName>pH-response regulator protein palF/RIM8</fullName>
    </recommendedName>
</protein>
<dbReference type="EMBL" id="CR382123">
    <property type="protein sequence ID" value="CAH01563.1"/>
    <property type="molecule type" value="Genomic_DNA"/>
</dbReference>
<dbReference type="RefSeq" id="XP_452712.1">
    <property type="nucleotide sequence ID" value="XM_452712.1"/>
</dbReference>
<dbReference type="SMR" id="Q6CTM7"/>
<dbReference type="FunCoup" id="Q6CTM7">
    <property type="interactions" value="45"/>
</dbReference>
<dbReference type="STRING" id="284590.Q6CTM7"/>
<dbReference type="PaxDb" id="284590-Q6CTM7"/>
<dbReference type="KEGG" id="kla:KLLA0_C11473g"/>
<dbReference type="eggNOG" id="ENOG502QTQN">
    <property type="taxonomic scope" value="Eukaryota"/>
</dbReference>
<dbReference type="HOGENOM" id="CLU_006001_1_0_1"/>
<dbReference type="InParanoid" id="Q6CTM7"/>
<dbReference type="OMA" id="GMSIEIV"/>
<dbReference type="Proteomes" id="UP000000598">
    <property type="component" value="Chromosome C"/>
</dbReference>
<dbReference type="GO" id="GO:0005829">
    <property type="term" value="C:cytosol"/>
    <property type="evidence" value="ECO:0007669"/>
    <property type="project" value="TreeGrafter"/>
</dbReference>
<dbReference type="GO" id="GO:0005886">
    <property type="term" value="C:plasma membrane"/>
    <property type="evidence" value="ECO:0007669"/>
    <property type="project" value="TreeGrafter"/>
</dbReference>
<dbReference type="GO" id="GO:0030674">
    <property type="term" value="F:protein-macromolecule adaptor activity"/>
    <property type="evidence" value="ECO:0007669"/>
    <property type="project" value="TreeGrafter"/>
</dbReference>
<dbReference type="GO" id="GO:0031625">
    <property type="term" value="F:ubiquitin protein ligase binding"/>
    <property type="evidence" value="ECO:0007669"/>
    <property type="project" value="TreeGrafter"/>
</dbReference>
<dbReference type="GO" id="GO:0070086">
    <property type="term" value="P:ubiquitin-dependent endocytosis"/>
    <property type="evidence" value="ECO:0007669"/>
    <property type="project" value="TreeGrafter"/>
</dbReference>
<dbReference type="Gene3D" id="2.60.40.640">
    <property type="match status" value="2"/>
</dbReference>
<dbReference type="InterPro" id="IPR014752">
    <property type="entry name" value="Arrestin-like_C"/>
</dbReference>
<dbReference type="InterPro" id="IPR011021">
    <property type="entry name" value="Arrestin-like_N"/>
</dbReference>
<dbReference type="InterPro" id="IPR011022">
    <property type="entry name" value="Arrestin_C-like"/>
</dbReference>
<dbReference type="InterPro" id="IPR050357">
    <property type="entry name" value="Arrestin_domain-protein"/>
</dbReference>
<dbReference type="InterPro" id="IPR014756">
    <property type="entry name" value="Ig_E-set"/>
</dbReference>
<dbReference type="PANTHER" id="PTHR11188">
    <property type="entry name" value="ARRESTIN DOMAIN CONTAINING PROTEIN"/>
    <property type="match status" value="1"/>
</dbReference>
<dbReference type="PANTHER" id="PTHR11188:SF161">
    <property type="entry name" value="PH-RESPONSE REGULATOR PROTEIN PALF_RIM8"/>
    <property type="match status" value="1"/>
</dbReference>
<dbReference type="Pfam" id="PF02752">
    <property type="entry name" value="Arrestin_C"/>
    <property type="match status" value="1"/>
</dbReference>
<dbReference type="Pfam" id="PF00339">
    <property type="entry name" value="Arrestin_N"/>
    <property type="match status" value="1"/>
</dbReference>
<dbReference type="SMART" id="SM01017">
    <property type="entry name" value="Arrestin_C"/>
    <property type="match status" value="1"/>
</dbReference>
<dbReference type="SUPFAM" id="SSF81296">
    <property type="entry name" value="E set domains"/>
    <property type="match status" value="1"/>
</dbReference>
<sequence length="572" mass="63684">MGLFDKLLRSNERAERGSPSAFVVSSFDSVSNAGKSSIFKHSGMKSYILEFEIVLDDVHRVWKPNETISGTVKLRLRKDVPNVWIKLAHIGEFQLHSNNPMTAGSLKSKYSDTVFCRSTSIYGSEENPLHLTGGEHKFPFSCKINGKNLVSSIDFKKGSIRYWVQAELHAQKTPPIFCKQHYQLIVPIDVGQLPKPNIKTVVLQSPNSSNNGIHVRRLMAAGSADPQDGASSLTRKTGGSSTITNGSSSSNNSGNSNASMLADNKTVKISVEIPCLGYTIGEEIPVKVHVTHYKQYFHPAGLIATLVRISRVSNPRNTEQIETFRKDICQGVAPLYTDPETHEAVIMLKLKVPLDTFPSLDLKNKFFTFQYYVEILANLSRKNLVYTESNRLVGGQRTSSIPMPSNKFSMFQDLSNQGEVTAGEDDSVTFFQDLINVDRLKRLRNVTGMSIEVVIGTHREEHEPESPTVDRLDSHSINQLPDDVDAVYNQCSSAESPIDEAYDYLLHRHNGPSPSSRIFTDTDMTLCYPADPVPLYSRGLDDFTGCSMSGVTDDKQELEQMRLKELESEPPI</sequence>
<comment type="function">
    <text evidence="1">Required for the proteolytic cleavage of the transcription factor RIM101 in response to alkaline ambient pH.</text>
</comment>
<comment type="similarity">
    <text evidence="3">Belongs to the arrestin family. PalF/RIM8 subfamily.</text>
</comment>
<organism>
    <name type="scientific">Kluyveromyces lactis (strain ATCC 8585 / CBS 2359 / DSM 70799 / NBRC 1267 / NRRL Y-1140 / WM37)</name>
    <name type="common">Yeast</name>
    <name type="synonym">Candida sphaerica</name>
    <dbReference type="NCBI Taxonomy" id="284590"/>
    <lineage>
        <taxon>Eukaryota</taxon>
        <taxon>Fungi</taxon>
        <taxon>Dikarya</taxon>
        <taxon>Ascomycota</taxon>
        <taxon>Saccharomycotina</taxon>
        <taxon>Saccharomycetes</taxon>
        <taxon>Saccharomycetales</taxon>
        <taxon>Saccharomycetaceae</taxon>
        <taxon>Kluyveromyces</taxon>
    </lineage>
</organism>
<feature type="chain" id="PRO_0000058190" description="pH-response regulator protein palF/RIM8">
    <location>
        <begin position="1"/>
        <end position="572"/>
    </location>
</feature>
<feature type="region of interest" description="Disordered" evidence="2">
    <location>
        <begin position="221"/>
        <end position="257"/>
    </location>
</feature>
<feature type="compositionally biased region" description="Low complexity" evidence="2">
    <location>
        <begin position="237"/>
        <end position="257"/>
    </location>
</feature>
<reference key="1">
    <citation type="journal article" date="2004" name="Nature">
        <title>Genome evolution in yeasts.</title>
        <authorList>
            <person name="Dujon B."/>
            <person name="Sherman D."/>
            <person name="Fischer G."/>
            <person name="Durrens P."/>
            <person name="Casaregola S."/>
            <person name="Lafontaine I."/>
            <person name="de Montigny J."/>
            <person name="Marck C."/>
            <person name="Neuveglise C."/>
            <person name="Talla E."/>
            <person name="Goffard N."/>
            <person name="Frangeul L."/>
            <person name="Aigle M."/>
            <person name="Anthouard V."/>
            <person name="Babour A."/>
            <person name="Barbe V."/>
            <person name="Barnay S."/>
            <person name="Blanchin S."/>
            <person name="Beckerich J.-M."/>
            <person name="Beyne E."/>
            <person name="Bleykasten C."/>
            <person name="Boisrame A."/>
            <person name="Boyer J."/>
            <person name="Cattolico L."/>
            <person name="Confanioleri F."/>
            <person name="de Daruvar A."/>
            <person name="Despons L."/>
            <person name="Fabre E."/>
            <person name="Fairhead C."/>
            <person name="Ferry-Dumazet H."/>
            <person name="Groppi A."/>
            <person name="Hantraye F."/>
            <person name="Hennequin C."/>
            <person name="Jauniaux N."/>
            <person name="Joyet P."/>
            <person name="Kachouri R."/>
            <person name="Kerrest A."/>
            <person name="Koszul R."/>
            <person name="Lemaire M."/>
            <person name="Lesur I."/>
            <person name="Ma L."/>
            <person name="Muller H."/>
            <person name="Nicaud J.-M."/>
            <person name="Nikolski M."/>
            <person name="Oztas S."/>
            <person name="Ozier-Kalogeropoulos O."/>
            <person name="Pellenz S."/>
            <person name="Potier S."/>
            <person name="Richard G.-F."/>
            <person name="Straub M.-L."/>
            <person name="Suleau A."/>
            <person name="Swennen D."/>
            <person name="Tekaia F."/>
            <person name="Wesolowski-Louvel M."/>
            <person name="Westhof E."/>
            <person name="Wirth B."/>
            <person name="Zeniou-Meyer M."/>
            <person name="Zivanovic Y."/>
            <person name="Bolotin-Fukuhara M."/>
            <person name="Thierry A."/>
            <person name="Bouchier C."/>
            <person name="Caudron B."/>
            <person name="Scarpelli C."/>
            <person name="Gaillardin C."/>
            <person name="Weissenbach J."/>
            <person name="Wincker P."/>
            <person name="Souciet J.-L."/>
        </authorList>
    </citation>
    <scope>NUCLEOTIDE SEQUENCE [LARGE SCALE GENOMIC DNA]</scope>
    <source>
        <strain>ATCC 8585 / CBS 2359 / DSM 70799 / NBRC 1267 / NRRL Y-1140 / WM37</strain>
    </source>
</reference>